<organism>
    <name type="scientific">Deinococcus radiodurans (strain ATCC 13939 / DSM 20539 / JCM 16871 / CCUG 27074 / LMG 4051 / NBRC 15346 / NCIMB 9279 / VKM B-1422 / R1)</name>
    <dbReference type="NCBI Taxonomy" id="243230"/>
    <lineage>
        <taxon>Bacteria</taxon>
        <taxon>Thermotogati</taxon>
        <taxon>Deinococcota</taxon>
        <taxon>Deinococci</taxon>
        <taxon>Deinococcales</taxon>
        <taxon>Deinococcaceae</taxon>
        <taxon>Deinococcus</taxon>
    </lineage>
</organism>
<name>SYL_DEIRA</name>
<protein>
    <recommendedName>
        <fullName evidence="1">Leucine--tRNA ligase</fullName>
        <ecNumber evidence="1">6.1.1.4</ecNumber>
    </recommendedName>
    <alternativeName>
        <fullName evidence="1">Leucyl-tRNA synthetase</fullName>
        <shortName evidence="1">LeuRS</shortName>
    </alternativeName>
</protein>
<feature type="chain" id="PRO_0000152009" description="Leucine--tRNA ligase">
    <location>
        <begin position="1"/>
        <end position="823"/>
    </location>
</feature>
<feature type="short sequence motif" description="'HIGH' region">
    <location>
        <begin position="55"/>
        <end position="65"/>
    </location>
</feature>
<feature type="short sequence motif" description="'KMSKS' region">
    <location>
        <begin position="590"/>
        <end position="594"/>
    </location>
</feature>
<feature type="binding site" evidence="1">
    <location>
        <position position="593"/>
    </location>
    <ligand>
        <name>ATP</name>
        <dbReference type="ChEBI" id="CHEBI:30616"/>
    </ligand>
</feature>
<keyword id="KW-0030">Aminoacyl-tRNA synthetase</keyword>
<keyword id="KW-0067">ATP-binding</keyword>
<keyword id="KW-0963">Cytoplasm</keyword>
<keyword id="KW-0436">Ligase</keyword>
<keyword id="KW-0547">Nucleotide-binding</keyword>
<keyword id="KW-0648">Protein biosynthesis</keyword>
<keyword id="KW-1185">Reference proteome</keyword>
<gene>
    <name evidence="1" type="primary">leuS</name>
    <name type="ordered locus">DR_2174</name>
</gene>
<dbReference type="EC" id="6.1.1.4" evidence="1"/>
<dbReference type="EMBL" id="AE000513">
    <property type="protein sequence ID" value="AAF11720.1"/>
    <property type="status" value="ALT_INIT"/>
    <property type="molecule type" value="Genomic_DNA"/>
</dbReference>
<dbReference type="PIR" id="D75307">
    <property type="entry name" value="D75307"/>
</dbReference>
<dbReference type="RefSeq" id="NP_295897.1">
    <property type="nucleotide sequence ID" value="NC_001263.1"/>
</dbReference>
<dbReference type="RefSeq" id="WP_027479923.1">
    <property type="nucleotide sequence ID" value="NC_001263.1"/>
</dbReference>
<dbReference type="SMR" id="Q9RSF0"/>
<dbReference type="FunCoup" id="Q9RSF0">
    <property type="interactions" value="518"/>
</dbReference>
<dbReference type="STRING" id="243230.DR_2174"/>
<dbReference type="PaxDb" id="243230-DR_2174"/>
<dbReference type="EnsemblBacteria" id="AAF11720">
    <property type="protein sequence ID" value="AAF11720"/>
    <property type="gene ID" value="DR_2174"/>
</dbReference>
<dbReference type="GeneID" id="69518416"/>
<dbReference type="KEGG" id="dra:DR_2174"/>
<dbReference type="PATRIC" id="fig|243230.17.peg.2398"/>
<dbReference type="eggNOG" id="COG0495">
    <property type="taxonomic scope" value="Bacteria"/>
</dbReference>
<dbReference type="HOGENOM" id="CLU_004427_0_0_0"/>
<dbReference type="InParanoid" id="Q9RSF0"/>
<dbReference type="OrthoDB" id="9810365at2"/>
<dbReference type="Proteomes" id="UP000002524">
    <property type="component" value="Chromosome 1"/>
</dbReference>
<dbReference type="GO" id="GO:0005829">
    <property type="term" value="C:cytosol"/>
    <property type="evidence" value="ECO:0000318"/>
    <property type="project" value="GO_Central"/>
</dbReference>
<dbReference type="GO" id="GO:0002161">
    <property type="term" value="F:aminoacyl-tRNA deacylase activity"/>
    <property type="evidence" value="ECO:0007669"/>
    <property type="project" value="InterPro"/>
</dbReference>
<dbReference type="GO" id="GO:0005524">
    <property type="term" value="F:ATP binding"/>
    <property type="evidence" value="ECO:0007669"/>
    <property type="project" value="UniProtKB-UniRule"/>
</dbReference>
<dbReference type="GO" id="GO:0004823">
    <property type="term" value="F:leucine-tRNA ligase activity"/>
    <property type="evidence" value="ECO:0000318"/>
    <property type="project" value="GO_Central"/>
</dbReference>
<dbReference type="GO" id="GO:0006429">
    <property type="term" value="P:leucyl-tRNA aminoacylation"/>
    <property type="evidence" value="ECO:0000318"/>
    <property type="project" value="GO_Central"/>
</dbReference>
<dbReference type="CDD" id="cd07958">
    <property type="entry name" value="Anticodon_Ia_Leu_BEm"/>
    <property type="match status" value="1"/>
</dbReference>
<dbReference type="CDD" id="cd00812">
    <property type="entry name" value="LeuRS_core"/>
    <property type="match status" value="1"/>
</dbReference>
<dbReference type="FunFam" id="1.10.730.10:FF:000003">
    <property type="entry name" value="Leucine--tRNA ligase"/>
    <property type="match status" value="1"/>
</dbReference>
<dbReference type="FunFam" id="3.10.20.590:FF:000001">
    <property type="entry name" value="Leucine--tRNA ligase"/>
    <property type="match status" value="1"/>
</dbReference>
<dbReference type="FunFam" id="3.40.50.620:FF:000003">
    <property type="entry name" value="Leucine--tRNA ligase"/>
    <property type="match status" value="1"/>
</dbReference>
<dbReference type="FunFam" id="3.40.50.620:FF:000265">
    <property type="entry name" value="Leucine--tRNA ligase"/>
    <property type="match status" value="1"/>
</dbReference>
<dbReference type="FunFam" id="3.90.740.10:FF:000017">
    <property type="entry name" value="Leucine--tRNA ligase"/>
    <property type="match status" value="1"/>
</dbReference>
<dbReference type="Gene3D" id="3.10.20.590">
    <property type="match status" value="1"/>
</dbReference>
<dbReference type="Gene3D" id="3.40.50.620">
    <property type="entry name" value="HUPs"/>
    <property type="match status" value="2"/>
</dbReference>
<dbReference type="Gene3D" id="1.10.730.10">
    <property type="entry name" value="Isoleucyl-tRNA Synthetase, Domain 1"/>
    <property type="match status" value="1"/>
</dbReference>
<dbReference type="Gene3D" id="3.90.740.10">
    <property type="entry name" value="Valyl/Leucyl/Isoleucyl-tRNA synthetase, editing domain"/>
    <property type="match status" value="1"/>
</dbReference>
<dbReference type="HAMAP" id="MF_00049_B">
    <property type="entry name" value="Leu_tRNA_synth_B"/>
    <property type="match status" value="1"/>
</dbReference>
<dbReference type="InterPro" id="IPR002300">
    <property type="entry name" value="aa-tRNA-synth_Ia"/>
</dbReference>
<dbReference type="InterPro" id="IPR002302">
    <property type="entry name" value="Leu-tRNA-ligase"/>
</dbReference>
<dbReference type="InterPro" id="IPR025709">
    <property type="entry name" value="Leu_tRNA-synth_edit"/>
</dbReference>
<dbReference type="InterPro" id="IPR013155">
    <property type="entry name" value="M/V/L/I-tRNA-synth_anticd-bd"/>
</dbReference>
<dbReference type="InterPro" id="IPR015413">
    <property type="entry name" value="Methionyl/Leucyl_tRNA_Synth"/>
</dbReference>
<dbReference type="InterPro" id="IPR014729">
    <property type="entry name" value="Rossmann-like_a/b/a_fold"/>
</dbReference>
<dbReference type="InterPro" id="IPR009080">
    <property type="entry name" value="tRNAsynth_Ia_anticodon-bd"/>
</dbReference>
<dbReference type="InterPro" id="IPR009008">
    <property type="entry name" value="Val/Leu/Ile-tRNA-synth_edit"/>
</dbReference>
<dbReference type="NCBIfam" id="TIGR00396">
    <property type="entry name" value="leuS_bact"/>
    <property type="match status" value="1"/>
</dbReference>
<dbReference type="PANTHER" id="PTHR43740:SF2">
    <property type="entry name" value="LEUCINE--TRNA LIGASE, MITOCHONDRIAL"/>
    <property type="match status" value="1"/>
</dbReference>
<dbReference type="PANTHER" id="PTHR43740">
    <property type="entry name" value="LEUCYL-TRNA SYNTHETASE"/>
    <property type="match status" value="1"/>
</dbReference>
<dbReference type="Pfam" id="PF08264">
    <property type="entry name" value="Anticodon_1"/>
    <property type="match status" value="1"/>
</dbReference>
<dbReference type="Pfam" id="PF00133">
    <property type="entry name" value="tRNA-synt_1"/>
    <property type="match status" value="1"/>
</dbReference>
<dbReference type="Pfam" id="PF13603">
    <property type="entry name" value="tRNA-synt_1_2"/>
    <property type="match status" value="1"/>
</dbReference>
<dbReference type="Pfam" id="PF09334">
    <property type="entry name" value="tRNA-synt_1g"/>
    <property type="match status" value="1"/>
</dbReference>
<dbReference type="PRINTS" id="PR00985">
    <property type="entry name" value="TRNASYNTHLEU"/>
</dbReference>
<dbReference type="SUPFAM" id="SSF47323">
    <property type="entry name" value="Anticodon-binding domain of a subclass of class I aminoacyl-tRNA synthetases"/>
    <property type="match status" value="1"/>
</dbReference>
<dbReference type="SUPFAM" id="SSF52374">
    <property type="entry name" value="Nucleotidylyl transferase"/>
    <property type="match status" value="1"/>
</dbReference>
<dbReference type="SUPFAM" id="SSF50677">
    <property type="entry name" value="ValRS/IleRS/LeuRS editing domain"/>
    <property type="match status" value="1"/>
</dbReference>
<proteinExistence type="inferred from homology"/>
<comment type="catalytic activity">
    <reaction evidence="1">
        <text>tRNA(Leu) + L-leucine + ATP = L-leucyl-tRNA(Leu) + AMP + diphosphate</text>
        <dbReference type="Rhea" id="RHEA:11688"/>
        <dbReference type="Rhea" id="RHEA-COMP:9613"/>
        <dbReference type="Rhea" id="RHEA-COMP:9622"/>
        <dbReference type="ChEBI" id="CHEBI:30616"/>
        <dbReference type="ChEBI" id="CHEBI:33019"/>
        <dbReference type="ChEBI" id="CHEBI:57427"/>
        <dbReference type="ChEBI" id="CHEBI:78442"/>
        <dbReference type="ChEBI" id="CHEBI:78494"/>
        <dbReference type="ChEBI" id="CHEBI:456215"/>
        <dbReference type="EC" id="6.1.1.4"/>
    </reaction>
</comment>
<comment type="subcellular location">
    <subcellularLocation>
        <location evidence="1">Cytoplasm</location>
    </subcellularLocation>
</comment>
<comment type="similarity">
    <text evidence="1">Belongs to the class-I aminoacyl-tRNA synthetase family.</text>
</comment>
<comment type="sequence caution" evidence="2">
    <conflict type="erroneous initiation">
        <sequence resource="EMBL-CDS" id="AAF11720"/>
    </conflict>
</comment>
<sequence length="823" mass="92613">MTQEATKPNIQEPRAERYNPHAIEQKWQGQWQESGLYKFDENAPGEKFYALTMFPYPSGNLHIGHWYANVAPDARARWLRMRGYNVLFPMAFDAFGLPAENAAIKNNTNPATWTYANIERMTGQFSRMGTMIDWSRKFATCDPEYYRWNQWFFIEFWKRGLAYKKGGLVNWCPKDQTVLANEQVVNGHCERCGTAVERRNLSQWYLKITDYAEELLDFSATDMPEKVRAMQTNWIGKSVGAEVTFDTPAGPETVFTTRPDTLMGATFMVLAPEHAKVKELTTDEQRAEVEAYVAAAGRKTDVERQQEGEKTGVFTGSYATHPISGHQLPIWVADYVLVTYGTGSIMAVPAHDERDFAFAKKFDLPIREVIRAEGSEGMGDQPSEPYSGEGQIVNSGEFDGMPGGKASIAAIIARLEERGVAKAKTTYRLRDWLFARQRYWGTPIPFVHCEKCGMQPVPEDQLPVKLPENVAFTPTGQSPLKLDEEWKTTTCPCCGGPAERETDTMDTFVDSSWYMYRYLSPNYDGGPFDPSKAGLLPVDLYTGGIEHAILHLLYSRFWTKVMRDMGLTTQSEPFARLRNQGMVLGEDGEKMSKSRGNVVDPDDLVREYGADTVRAFLMFIAPWELGGPWDPQGINGPSKWLSRVWNVFFEEKVSGPEEKMQGADVRFAVHSALKKVNDDFERMSFNTIISTLMELTNALVKAKRSPVFGTPVWEEALDIFNRMLAPVVPHIAEEIWHERGQKGSVHTAQWPQVDEAAAVRDTVTIGVQVSGKVRGEVSISKTASQEEALSAARAIAEVQKHLEGKTVVKEIYVPGRIINIVAK</sequence>
<evidence type="ECO:0000255" key="1">
    <source>
        <dbReference type="HAMAP-Rule" id="MF_00049"/>
    </source>
</evidence>
<evidence type="ECO:0000305" key="2"/>
<reference key="1">
    <citation type="journal article" date="1999" name="Science">
        <title>Genome sequence of the radioresistant bacterium Deinococcus radiodurans R1.</title>
        <authorList>
            <person name="White O."/>
            <person name="Eisen J.A."/>
            <person name="Heidelberg J.F."/>
            <person name="Hickey E.K."/>
            <person name="Peterson J.D."/>
            <person name="Dodson R.J."/>
            <person name="Haft D.H."/>
            <person name="Gwinn M.L."/>
            <person name="Nelson W.C."/>
            <person name="Richardson D.L."/>
            <person name="Moffat K.S."/>
            <person name="Qin H."/>
            <person name="Jiang L."/>
            <person name="Pamphile W."/>
            <person name="Crosby M."/>
            <person name="Shen M."/>
            <person name="Vamathevan J.J."/>
            <person name="Lam P."/>
            <person name="McDonald L.A."/>
            <person name="Utterback T.R."/>
            <person name="Zalewski C."/>
            <person name="Makarova K.S."/>
            <person name="Aravind L."/>
            <person name="Daly M.J."/>
            <person name="Minton K.W."/>
            <person name="Fleischmann R.D."/>
            <person name="Ketchum K.A."/>
            <person name="Nelson K.E."/>
            <person name="Salzberg S.L."/>
            <person name="Smith H.O."/>
            <person name="Venter J.C."/>
            <person name="Fraser C.M."/>
        </authorList>
    </citation>
    <scope>NUCLEOTIDE SEQUENCE [LARGE SCALE GENOMIC DNA]</scope>
    <source>
        <strain>ATCC 13939 / DSM 20539 / JCM 16871 / CCUG 27074 / LMG 4051 / NBRC 15346 / NCIMB 9279 / VKM B-1422 / R1</strain>
    </source>
</reference>
<accession>Q9RSF0</accession>